<keyword id="KW-0067">ATP-binding</keyword>
<keyword id="KW-0143">Chaperone</keyword>
<keyword id="KW-0547">Nucleotide-binding</keyword>
<keyword id="KW-1185">Reference proteome</keyword>
<feature type="chain" id="PRO_1000044901" description="Chaperone protein HscA homolog">
    <location>
        <begin position="1"/>
        <end position="614"/>
    </location>
</feature>
<organism>
    <name type="scientific">Vesicomyosocius okutanii subsp. Calyptogena okutanii (strain HA)</name>
    <dbReference type="NCBI Taxonomy" id="412965"/>
    <lineage>
        <taxon>Bacteria</taxon>
        <taxon>Pseudomonadati</taxon>
        <taxon>Pseudomonadota</taxon>
        <taxon>Gammaproteobacteria</taxon>
        <taxon>Candidatus Pseudothioglobaceae</taxon>
        <taxon>Candidatus Vesicomyosocius</taxon>
    </lineage>
</organism>
<gene>
    <name evidence="1" type="primary">hscA</name>
    <name type="ordered locus">COSY_0528</name>
</gene>
<reference key="1">
    <citation type="journal article" date="2007" name="Curr. Biol.">
        <title>Reduced genome of the thioautotrophic intracellular symbiont in a deep-sea clam, Calyptogena okutanii.</title>
        <authorList>
            <person name="Kuwahara H."/>
            <person name="Yoshida T."/>
            <person name="Takaki Y."/>
            <person name="Shimamura S."/>
            <person name="Nishi S."/>
            <person name="Harada M."/>
            <person name="Matsuyama K."/>
            <person name="Takishita K."/>
            <person name="Kawato M."/>
            <person name="Uematsu K."/>
            <person name="Fujiwara Y."/>
            <person name="Sato T."/>
            <person name="Kato C."/>
            <person name="Kitagawa M."/>
            <person name="Kato I."/>
            <person name="Maruyama T."/>
        </authorList>
    </citation>
    <scope>NUCLEOTIDE SEQUENCE [LARGE SCALE GENOMIC DNA]</scope>
    <source>
        <strain>HA</strain>
    </source>
</reference>
<dbReference type="EMBL" id="AP009247">
    <property type="protein sequence ID" value="BAF61646.1"/>
    <property type="molecule type" value="Genomic_DNA"/>
</dbReference>
<dbReference type="RefSeq" id="WP_011929916.1">
    <property type="nucleotide sequence ID" value="NC_009465.1"/>
</dbReference>
<dbReference type="SMR" id="A5CWM2"/>
<dbReference type="STRING" id="412965.COSY_0528"/>
<dbReference type="KEGG" id="vok:COSY_0528"/>
<dbReference type="eggNOG" id="COG0443">
    <property type="taxonomic scope" value="Bacteria"/>
</dbReference>
<dbReference type="HOGENOM" id="CLU_005965_2_1_6"/>
<dbReference type="OrthoDB" id="9766019at2"/>
<dbReference type="Proteomes" id="UP000000247">
    <property type="component" value="Chromosome"/>
</dbReference>
<dbReference type="GO" id="GO:0005524">
    <property type="term" value="F:ATP binding"/>
    <property type="evidence" value="ECO:0007669"/>
    <property type="project" value="UniProtKB-KW"/>
</dbReference>
<dbReference type="GO" id="GO:0016887">
    <property type="term" value="F:ATP hydrolysis activity"/>
    <property type="evidence" value="ECO:0007669"/>
    <property type="project" value="UniProtKB-UniRule"/>
</dbReference>
<dbReference type="GO" id="GO:0140662">
    <property type="term" value="F:ATP-dependent protein folding chaperone"/>
    <property type="evidence" value="ECO:0007669"/>
    <property type="project" value="InterPro"/>
</dbReference>
<dbReference type="GO" id="GO:0051082">
    <property type="term" value="F:unfolded protein binding"/>
    <property type="evidence" value="ECO:0007669"/>
    <property type="project" value="InterPro"/>
</dbReference>
<dbReference type="GO" id="GO:0016226">
    <property type="term" value="P:iron-sulfur cluster assembly"/>
    <property type="evidence" value="ECO:0007669"/>
    <property type="project" value="InterPro"/>
</dbReference>
<dbReference type="CDD" id="cd10236">
    <property type="entry name" value="ASKHA_NBD_HSP70_HscA"/>
    <property type="match status" value="1"/>
</dbReference>
<dbReference type="FunFam" id="3.30.420.40:FF:000046">
    <property type="entry name" value="Chaperone protein HscA"/>
    <property type="match status" value="1"/>
</dbReference>
<dbReference type="FunFam" id="2.60.34.10:FF:000005">
    <property type="entry name" value="Chaperone protein HscA homolog"/>
    <property type="match status" value="1"/>
</dbReference>
<dbReference type="Gene3D" id="1.20.1270.10">
    <property type="match status" value="1"/>
</dbReference>
<dbReference type="Gene3D" id="3.30.420.40">
    <property type="match status" value="2"/>
</dbReference>
<dbReference type="Gene3D" id="3.90.640.10">
    <property type="entry name" value="Actin, Chain A, domain 4"/>
    <property type="match status" value="1"/>
</dbReference>
<dbReference type="Gene3D" id="2.60.34.10">
    <property type="entry name" value="Substrate Binding Domain Of DNAk, Chain A, domain 1"/>
    <property type="match status" value="1"/>
</dbReference>
<dbReference type="HAMAP" id="MF_00679">
    <property type="entry name" value="HscA"/>
    <property type="match status" value="1"/>
</dbReference>
<dbReference type="InterPro" id="IPR043129">
    <property type="entry name" value="ATPase_NBD"/>
</dbReference>
<dbReference type="InterPro" id="IPR018181">
    <property type="entry name" value="Heat_shock_70_CS"/>
</dbReference>
<dbReference type="InterPro" id="IPR042039">
    <property type="entry name" value="HscA_NBD"/>
</dbReference>
<dbReference type="InterPro" id="IPR029048">
    <property type="entry name" value="HSP70_C_sf"/>
</dbReference>
<dbReference type="InterPro" id="IPR029047">
    <property type="entry name" value="HSP70_peptide-bd_sf"/>
</dbReference>
<dbReference type="InterPro" id="IPR013126">
    <property type="entry name" value="Hsp_70_fam"/>
</dbReference>
<dbReference type="InterPro" id="IPR010236">
    <property type="entry name" value="ISC_FeS_clus_asmbl_HscA"/>
</dbReference>
<dbReference type="NCBIfam" id="TIGR01991">
    <property type="entry name" value="HscA"/>
    <property type="match status" value="1"/>
</dbReference>
<dbReference type="NCBIfam" id="NF003520">
    <property type="entry name" value="PRK05183.1"/>
    <property type="match status" value="1"/>
</dbReference>
<dbReference type="PANTHER" id="PTHR19375">
    <property type="entry name" value="HEAT SHOCK PROTEIN 70KDA"/>
    <property type="match status" value="1"/>
</dbReference>
<dbReference type="Pfam" id="PF00012">
    <property type="entry name" value="HSP70"/>
    <property type="match status" value="1"/>
</dbReference>
<dbReference type="PRINTS" id="PR00301">
    <property type="entry name" value="HEATSHOCK70"/>
</dbReference>
<dbReference type="SUPFAM" id="SSF53067">
    <property type="entry name" value="Actin-like ATPase domain"/>
    <property type="match status" value="2"/>
</dbReference>
<dbReference type="SUPFAM" id="SSF100934">
    <property type="entry name" value="Heat shock protein 70kD (HSP70), C-terminal subdomain"/>
    <property type="match status" value="1"/>
</dbReference>
<dbReference type="SUPFAM" id="SSF100920">
    <property type="entry name" value="Heat shock protein 70kD (HSP70), peptide-binding domain"/>
    <property type="match status" value="1"/>
</dbReference>
<dbReference type="PROSITE" id="PS00297">
    <property type="entry name" value="HSP70_1"/>
    <property type="match status" value="1"/>
</dbReference>
<dbReference type="PROSITE" id="PS00329">
    <property type="entry name" value="HSP70_2"/>
    <property type="match status" value="1"/>
</dbReference>
<dbReference type="PROSITE" id="PS01036">
    <property type="entry name" value="HSP70_3"/>
    <property type="match status" value="1"/>
</dbReference>
<sequence>MTLLQISEPSQVSKPHQHKLVIGIDLGTTNSLVASVINGQSKVIMDENNEAVLPSIIHCGKHNKLTVGCDAYPYAKTDPTNTIISIKRFMGMSYEEVSTFKNCPYQLIKDGNNVLFHTSMGNLSAVEISASILSSLKQRAENSLGGVLSGAVITTPAYFNDAQRQATKDAATLAGLKTLRLLNEPTAAAVAYGLESGEEGVHAIYDLGGGTFDISILNFSKGVFKVLAIGGDATLGGDDFDELIINDCIEQLSINELTPAQMQEIKQFSRIAKETLSNYEFSEFDCIKRPYCITKKKFETLAKVLIKRTLLLTKQAIRDAQVDVKNIKNIIMVGGSTRIPLVCSMVSDLFNKPVLCSINPDEVVAKGAAIQANILAGIKSQNDILLLDVLPLSLGLETMGGLVEKIIHRNTTIPIIRAQEFTTFKDGQTAMSIHVLQGERELVRDCRSLAKFDLYGIPAMVAGNARIRIEFQVDVDGLLSVSAVEQISGVKTNISIKPSYGLTDVQKEKMLKDSFLFAKTDIQTRKLHETQVEANRTIEAIDSAIKKDKNMLDDKMLNNILNARNTLFDIVHSDDEKAISIAIENLENSCLKFVEMRMNSSVMKAIQGRNIDEF</sequence>
<protein>
    <recommendedName>
        <fullName evidence="1">Chaperone protein HscA homolog</fullName>
    </recommendedName>
</protein>
<proteinExistence type="inferred from homology"/>
<comment type="function">
    <text evidence="1">Chaperone involved in the maturation of iron-sulfur cluster-containing proteins. Has a low intrinsic ATPase activity which is markedly stimulated by HscB.</text>
</comment>
<comment type="similarity">
    <text evidence="1">Belongs to the heat shock protein 70 family.</text>
</comment>
<name>HSCA_VESOH</name>
<evidence type="ECO:0000255" key="1">
    <source>
        <dbReference type="HAMAP-Rule" id="MF_00679"/>
    </source>
</evidence>
<accession>A5CWM2</accession>